<feature type="chain" id="PRO_0000356894" description="Putative S-adenosyl-L-methionine-dependent methyltransferase ML2640">
    <location>
        <begin position="1"/>
        <end position="310"/>
    </location>
</feature>
<feature type="binding site" evidence="1">
    <location>
        <position position="132"/>
    </location>
    <ligand>
        <name>S-adenosyl-L-methionine</name>
        <dbReference type="ChEBI" id="CHEBI:59789"/>
    </ligand>
</feature>
<feature type="binding site">
    <location>
        <begin position="161"/>
        <end position="162"/>
    </location>
    <ligand>
        <name>S-adenosyl-L-methionine</name>
        <dbReference type="ChEBI" id="CHEBI:59789"/>
    </ligand>
</feature>
<feature type="helix" evidence="5">
    <location>
        <begin position="16"/>
        <end position="29"/>
    </location>
</feature>
<feature type="helix" evidence="5">
    <location>
        <begin position="41"/>
        <end position="46"/>
    </location>
</feature>
<feature type="helix" evidence="5">
    <location>
        <begin position="53"/>
        <end position="56"/>
    </location>
</feature>
<feature type="helix" evidence="4">
    <location>
        <begin position="60"/>
        <end position="62"/>
    </location>
</feature>
<feature type="helix" evidence="4">
    <location>
        <begin position="63"/>
        <end position="69"/>
    </location>
</feature>
<feature type="helix" evidence="5">
    <location>
        <begin position="71"/>
        <end position="100"/>
    </location>
</feature>
<feature type="strand" evidence="5">
    <location>
        <begin position="105"/>
        <end position="109"/>
    </location>
</feature>
<feature type="helix" evidence="5">
    <location>
        <begin position="116"/>
        <end position="119"/>
    </location>
</feature>
<feature type="strand" evidence="5">
    <location>
        <begin position="127"/>
        <end position="132"/>
    </location>
</feature>
<feature type="helix" evidence="5">
    <location>
        <begin position="134"/>
        <end position="146"/>
    </location>
</feature>
<feature type="strand" evidence="5">
    <location>
        <begin position="152"/>
        <end position="159"/>
    </location>
</feature>
<feature type="helix" evidence="5">
    <location>
        <begin position="166"/>
        <end position="172"/>
    </location>
</feature>
<feature type="strand" evidence="5">
    <location>
        <begin position="181"/>
        <end position="185"/>
    </location>
</feature>
<feature type="helix" evidence="5">
    <location>
        <begin position="189"/>
        <end position="191"/>
    </location>
</feature>
<feature type="helix" evidence="5">
    <location>
        <begin position="194"/>
        <end position="206"/>
    </location>
</feature>
<feature type="strand" evidence="5">
    <location>
        <begin position="213"/>
        <end position="217"/>
    </location>
</feature>
<feature type="helix" evidence="5">
    <location>
        <begin position="225"/>
        <end position="238"/>
    </location>
</feature>
<feature type="turn" evidence="4">
    <location>
        <begin position="253"/>
        <end position="256"/>
    </location>
</feature>
<feature type="helix" evidence="5">
    <location>
        <begin position="262"/>
        <end position="266"/>
    </location>
</feature>
<feature type="turn" evidence="5">
    <location>
        <begin position="267"/>
        <end position="270"/>
    </location>
</feature>
<feature type="strand" evidence="5">
    <location>
        <begin position="271"/>
        <end position="277"/>
    </location>
</feature>
<feature type="helix" evidence="5">
    <location>
        <begin position="278"/>
        <end position="284"/>
    </location>
</feature>
<feature type="turn" evidence="5">
    <location>
        <begin position="293"/>
        <end position="296"/>
    </location>
</feature>
<feature type="helix" evidence="5">
    <location>
        <begin position="298"/>
        <end position="300"/>
    </location>
</feature>
<feature type="strand" evidence="5">
    <location>
        <begin position="303"/>
        <end position="309"/>
    </location>
</feature>
<gene>
    <name type="ordered locus">ML2640</name>
</gene>
<keyword id="KW-0002">3D-structure</keyword>
<keyword id="KW-0489">Methyltransferase</keyword>
<keyword id="KW-1185">Reference proteome</keyword>
<keyword id="KW-0949">S-adenosyl-L-methionine</keyword>
<keyword id="KW-0808">Transferase</keyword>
<reference key="1">
    <citation type="journal article" date="2001" name="Nature">
        <title>Massive gene decay in the leprosy bacillus.</title>
        <authorList>
            <person name="Cole S.T."/>
            <person name="Eiglmeier K."/>
            <person name="Parkhill J."/>
            <person name="James K.D."/>
            <person name="Thomson N.R."/>
            <person name="Wheeler P.R."/>
            <person name="Honore N."/>
            <person name="Garnier T."/>
            <person name="Churcher C.M."/>
            <person name="Harris D.E."/>
            <person name="Mungall K.L."/>
            <person name="Basham D."/>
            <person name="Brown D."/>
            <person name="Chillingworth T."/>
            <person name="Connor R."/>
            <person name="Davies R.M."/>
            <person name="Devlin K."/>
            <person name="Duthoy S."/>
            <person name="Feltwell T."/>
            <person name="Fraser A."/>
            <person name="Hamlin N."/>
            <person name="Holroyd S."/>
            <person name="Hornsby T."/>
            <person name="Jagels K."/>
            <person name="Lacroix C."/>
            <person name="Maclean J."/>
            <person name="Moule S."/>
            <person name="Murphy L.D."/>
            <person name="Oliver K."/>
            <person name="Quail M.A."/>
            <person name="Rajandream M.A."/>
            <person name="Rutherford K.M."/>
            <person name="Rutter S."/>
            <person name="Seeger K."/>
            <person name="Simon S."/>
            <person name="Simmonds M."/>
            <person name="Skelton J."/>
            <person name="Squares R."/>
            <person name="Squares S."/>
            <person name="Stevens K."/>
            <person name="Taylor K."/>
            <person name="Whitehead S."/>
            <person name="Woodward J.R."/>
            <person name="Barrell B.G."/>
        </authorList>
    </citation>
    <scope>NUCLEOTIDE SEQUENCE [LARGE SCALE GENOMIC DNA]</scope>
    <source>
        <strain>TN</strain>
    </source>
</reference>
<reference key="2">
    <citation type="journal article" date="2007" name="Protein Sci.">
        <title>The crystal structure of M. leprae ML2640c defines a large family of putative S-adenosylmethionine-dependent methyltransferases in mycobacteria.</title>
        <authorList>
            <person name="Grana M."/>
            <person name="Haouz A."/>
            <person name="Buschiazzo A."/>
            <person name="Miras I."/>
            <person name="Wehenkel A."/>
            <person name="Bondet V."/>
            <person name="Shepard W."/>
            <person name="Schaeffer F."/>
            <person name="Cole S.T."/>
            <person name="Alzari P.M."/>
        </authorList>
    </citation>
    <scope>X-RAY CRYSTALLOGRAPHY (1.7 ANGSTROMS) IN COMPLEX WITH S-ADENOSYL-L-METHIONINE</scope>
    <scope>FUNCTION</scope>
</reference>
<evidence type="ECO:0000269" key="1">
    <source>
    </source>
</evidence>
<evidence type="ECO:0000305" key="2"/>
<evidence type="ECO:0000305" key="3">
    <source>
    </source>
</evidence>
<evidence type="ECO:0007829" key="4">
    <source>
        <dbReference type="PDB" id="2CKD"/>
    </source>
</evidence>
<evidence type="ECO:0007829" key="5">
    <source>
        <dbReference type="PDB" id="2UYO"/>
    </source>
</evidence>
<sequence>MRTHDDTWDIKTSVGTTAVMVAAARAAETDRPDALIRDPYAKLLVTNTGAGALWEAMLDPSMVAKVEAIDAEAAAMVEHMRSYQAVRTNFFDTYFNNAVIDGIRQFVILASGLDSRAYRLDWPTGTTVYEIDQPKVLAYKSTTLAEHGVTPTADRREVPIDLRQDWPPALRSAGFDPSARTAWLAEGLLMYLPATAQDGLFTEIGGLSAVGSRIAVETSPLHGDEWREQMQLRFRRVSDALGFEQAVDVQELIYHDENRAVVADWLNRHGWRATAQSAPDEMRRVGRWGDGVPMADDKDAFAEFVTAHRL</sequence>
<accession>Q9CCZ4</accession>
<comment type="function">
    <text evidence="3">Exhibits S-adenosyl-L-methionine-dependent methyltransferase activity.</text>
</comment>
<comment type="similarity">
    <text evidence="2">Belongs to the UPF0677 family.</text>
</comment>
<dbReference type="EC" id="2.1.1.-"/>
<dbReference type="EMBL" id="AL583926">
    <property type="protein sequence ID" value="CAC32172.1"/>
    <property type="molecule type" value="Genomic_DNA"/>
</dbReference>
<dbReference type="PIR" id="F87239">
    <property type="entry name" value="F87239"/>
</dbReference>
<dbReference type="RefSeq" id="NP_302690.1">
    <property type="nucleotide sequence ID" value="NC_002677.1"/>
</dbReference>
<dbReference type="RefSeq" id="WP_010909009.1">
    <property type="nucleotide sequence ID" value="NC_002677.1"/>
</dbReference>
<dbReference type="PDB" id="2CKD">
    <property type="method" value="X-ray"/>
    <property type="resolution" value="2.80 A"/>
    <property type="chains" value="A/B=1-310"/>
</dbReference>
<dbReference type="PDB" id="2UYO">
    <property type="method" value="X-ray"/>
    <property type="resolution" value="1.70 A"/>
    <property type="chains" value="A=1-310"/>
</dbReference>
<dbReference type="PDB" id="2UYQ">
    <property type="method" value="X-ray"/>
    <property type="resolution" value="1.80 A"/>
    <property type="chains" value="A=1-310"/>
</dbReference>
<dbReference type="PDBsum" id="2CKD"/>
<dbReference type="PDBsum" id="2UYO"/>
<dbReference type="PDBsum" id="2UYQ"/>
<dbReference type="SMR" id="Q9CCZ4"/>
<dbReference type="STRING" id="272631.gene:17576506"/>
<dbReference type="KEGG" id="mle:ML2640"/>
<dbReference type="PATRIC" id="fig|272631.5.peg.5067"/>
<dbReference type="Leproma" id="ML2640"/>
<dbReference type="eggNOG" id="COG3315">
    <property type="taxonomic scope" value="Bacteria"/>
</dbReference>
<dbReference type="HOGENOM" id="CLU_056160_2_1_11"/>
<dbReference type="OrthoDB" id="9806164at2"/>
<dbReference type="EvolutionaryTrace" id="Q9CCZ4"/>
<dbReference type="PRO" id="PR:Q9CCZ4"/>
<dbReference type="Proteomes" id="UP000000806">
    <property type="component" value="Chromosome"/>
</dbReference>
<dbReference type="GO" id="GO:0008168">
    <property type="term" value="F:methyltransferase activity"/>
    <property type="evidence" value="ECO:0007669"/>
    <property type="project" value="UniProtKB-KW"/>
</dbReference>
<dbReference type="GO" id="GO:0032259">
    <property type="term" value="P:methylation"/>
    <property type="evidence" value="ECO:0007669"/>
    <property type="project" value="UniProtKB-KW"/>
</dbReference>
<dbReference type="FunFam" id="3.40.50.150:FF:000152">
    <property type="entry name" value="S-adenosyl-L-methionine-dependent methyltransferase"/>
    <property type="match status" value="1"/>
</dbReference>
<dbReference type="Gene3D" id="3.40.50.150">
    <property type="entry name" value="Vaccinia Virus protein VP39"/>
    <property type="match status" value="1"/>
</dbReference>
<dbReference type="InterPro" id="IPR007213">
    <property type="entry name" value="Ppm1/Ppm2/Tcmp"/>
</dbReference>
<dbReference type="InterPro" id="IPR029063">
    <property type="entry name" value="SAM-dependent_MTases_sf"/>
</dbReference>
<dbReference type="InterPro" id="IPR011610">
    <property type="entry name" value="SAM_mthyl_Trfase_ML2640-like"/>
</dbReference>
<dbReference type="NCBIfam" id="TIGR00027">
    <property type="entry name" value="mthyl_TIGR00027"/>
    <property type="match status" value="1"/>
</dbReference>
<dbReference type="PANTHER" id="PTHR43619">
    <property type="entry name" value="S-ADENOSYL-L-METHIONINE-DEPENDENT METHYLTRANSFERASE YKTD-RELATED"/>
    <property type="match status" value="1"/>
</dbReference>
<dbReference type="PANTHER" id="PTHR43619:SF2">
    <property type="entry name" value="S-ADENOSYL-L-METHIONINE-DEPENDENT METHYLTRANSFERASES SUPERFAMILY PROTEIN"/>
    <property type="match status" value="1"/>
</dbReference>
<dbReference type="Pfam" id="PF04072">
    <property type="entry name" value="LCM"/>
    <property type="match status" value="1"/>
</dbReference>
<dbReference type="SUPFAM" id="SSF53335">
    <property type="entry name" value="S-adenosyl-L-methionine-dependent methyltransferases"/>
    <property type="match status" value="1"/>
</dbReference>
<organism>
    <name type="scientific">Mycobacterium leprae (strain TN)</name>
    <dbReference type="NCBI Taxonomy" id="272631"/>
    <lineage>
        <taxon>Bacteria</taxon>
        <taxon>Bacillati</taxon>
        <taxon>Actinomycetota</taxon>
        <taxon>Actinomycetes</taxon>
        <taxon>Mycobacteriales</taxon>
        <taxon>Mycobacteriaceae</taxon>
        <taxon>Mycobacterium</taxon>
    </lineage>
</organism>
<name>Y2640_MYCLE</name>
<proteinExistence type="evidence at protein level"/>
<protein>
    <recommendedName>
        <fullName>Putative S-adenosyl-L-methionine-dependent methyltransferase ML2640</fullName>
        <ecNumber>2.1.1.-</ecNumber>
    </recommendedName>
</protein>